<feature type="chain" id="PRO_1000213400" description="UPF0223 protein SZO_10560">
    <location>
        <begin position="1"/>
        <end position="92"/>
    </location>
</feature>
<reference key="1">
    <citation type="journal article" date="2009" name="PLoS Pathog.">
        <title>Genomic evidence for the evolution of Streptococcus equi: host restriction, increased virulence, and genetic exchange with human pathogens.</title>
        <authorList>
            <person name="Holden M.T.G."/>
            <person name="Heather Z."/>
            <person name="Paillot R."/>
            <person name="Steward K.F."/>
            <person name="Webb K."/>
            <person name="Ainslie F."/>
            <person name="Jourdan T."/>
            <person name="Bason N.C."/>
            <person name="Holroyd N.E."/>
            <person name="Mungall K."/>
            <person name="Quail M.A."/>
            <person name="Sanders M."/>
            <person name="Simmonds M."/>
            <person name="Willey D."/>
            <person name="Brooks K."/>
            <person name="Aanensen D.M."/>
            <person name="Spratt B.G."/>
            <person name="Jolley K.A."/>
            <person name="Maiden M.C.J."/>
            <person name="Kehoe M."/>
            <person name="Chanter N."/>
            <person name="Bentley S.D."/>
            <person name="Robinson C."/>
            <person name="Maskell D.J."/>
            <person name="Parkhill J."/>
            <person name="Waller A.S."/>
        </authorList>
    </citation>
    <scope>NUCLEOTIDE SEQUENCE [LARGE SCALE GENOMIC DNA]</scope>
    <source>
        <strain>H70</strain>
    </source>
</reference>
<gene>
    <name type="ordered locus">SZO_10560</name>
</gene>
<protein>
    <recommendedName>
        <fullName evidence="1">UPF0223 protein SZO_10560</fullName>
    </recommendedName>
</protein>
<evidence type="ECO:0000255" key="1">
    <source>
        <dbReference type="HAMAP-Rule" id="MF_01041"/>
    </source>
</evidence>
<organism>
    <name type="scientific">Streptococcus equi subsp. zooepidemicus (strain H70)</name>
    <dbReference type="NCBI Taxonomy" id="553483"/>
    <lineage>
        <taxon>Bacteria</taxon>
        <taxon>Bacillati</taxon>
        <taxon>Bacillota</taxon>
        <taxon>Bacilli</taxon>
        <taxon>Lactobacillales</taxon>
        <taxon>Streptococcaceae</taxon>
        <taxon>Streptococcus</taxon>
    </lineage>
</organism>
<comment type="similarity">
    <text evidence="1">Belongs to the UPF0223 family.</text>
</comment>
<accession>C0MG79</accession>
<sequence length="92" mass="10684">MSDHYHYPLDVSWSTEEITSVLHFLNQVELAYEAKVGAEELLKSYAAYKEIVRSKSQEKQIDREFQQASGYSTYQAVKKAREIEKGFFSLGR</sequence>
<name>Y1056_STRS7</name>
<proteinExistence type="inferred from homology"/>
<dbReference type="EMBL" id="FM204884">
    <property type="protein sequence ID" value="CAW99419.1"/>
    <property type="molecule type" value="Genomic_DNA"/>
</dbReference>
<dbReference type="SMR" id="C0MG79"/>
<dbReference type="KEGG" id="seq:SZO_10560"/>
<dbReference type="eggNOG" id="COG4476">
    <property type="taxonomic scope" value="Bacteria"/>
</dbReference>
<dbReference type="HOGENOM" id="CLU_166693_0_0_9"/>
<dbReference type="Proteomes" id="UP000001368">
    <property type="component" value="Chromosome"/>
</dbReference>
<dbReference type="Gene3D" id="1.10.220.80">
    <property type="entry name" value="BH2638-like"/>
    <property type="match status" value="1"/>
</dbReference>
<dbReference type="HAMAP" id="MF_01041">
    <property type="entry name" value="UPF0223"/>
    <property type="match status" value="1"/>
</dbReference>
<dbReference type="InterPro" id="IPR023324">
    <property type="entry name" value="BH2638-like_sf"/>
</dbReference>
<dbReference type="InterPro" id="IPR007920">
    <property type="entry name" value="UPF0223"/>
</dbReference>
<dbReference type="NCBIfam" id="NF003353">
    <property type="entry name" value="PRK04387.1"/>
    <property type="match status" value="1"/>
</dbReference>
<dbReference type="Pfam" id="PF05256">
    <property type="entry name" value="UPF0223"/>
    <property type="match status" value="1"/>
</dbReference>
<dbReference type="PIRSF" id="PIRSF037260">
    <property type="entry name" value="UPF0223"/>
    <property type="match status" value="1"/>
</dbReference>
<dbReference type="SUPFAM" id="SSF158504">
    <property type="entry name" value="BH2638-like"/>
    <property type="match status" value="1"/>
</dbReference>